<comment type="function">
    <text evidence="2">Plays an essential role in transcription initiation and cap-stealing mechanism, in which cellular capped pre-mRNAs are used to generate primers for viral transcription. Binds the cap of the target pre-RNA which is subsequently cleaved after 10-13 nucleotides by PA. Plays a role in the initiation of the viral genome replication and modulates the activity of the ribonucleoprotein (RNP) complex. In addition, participates in the inhibition of type I interferon induction through interaction with the host mitochondrial antiviral signaling protein MAVS.</text>
</comment>
<comment type="subunit">
    <text evidence="2">Influenza RNA polymerase is composed of three subunits: PB1, PB2 and PA. Interacts (via N-terminus) with PB1 (via C-terminus). Interacts with nucleoprotein NP (via N-terminus). Interacts (via N-terminus) with host MAVS (via N-terminus); this interaction inhibits host innate immune response.</text>
</comment>
<comment type="subcellular location">
    <subcellularLocation>
        <location>Virion</location>
    </subcellularLocation>
    <subcellularLocation>
        <location evidence="2">Host nucleus</location>
    </subcellularLocation>
    <subcellularLocation>
        <location evidence="2">Host mitochondrion</location>
    </subcellularLocation>
</comment>
<comment type="similarity">
    <text evidence="3">Belongs to the influenza viruses PB2 family.</text>
</comment>
<organism>
    <name type="scientific">Influenza A virus (strain A/Chicken/Hong Kong/FY150/2001 H5N1 genotype D)</name>
    <dbReference type="NCBI Taxonomy" id="222142"/>
    <lineage>
        <taxon>Viruses</taxon>
        <taxon>Riboviria</taxon>
        <taxon>Orthornavirae</taxon>
        <taxon>Negarnaviricota</taxon>
        <taxon>Polyploviricotina</taxon>
        <taxon>Insthoviricetes</taxon>
        <taxon>Articulavirales</taxon>
        <taxon>Orthomyxoviridae</taxon>
        <taxon>Alphainfluenzavirus</taxon>
        <taxon>Alphainfluenzavirus influenzae</taxon>
        <taxon>Influenza A virus</taxon>
    </lineage>
</organism>
<evidence type="ECO:0000250" key="1"/>
<evidence type="ECO:0000250" key="2">
    <source>
        <dbReference type="UniProtKB" id="P03428"/>
    </source>
</evidence>
<evidence type="ECO:0000305" key="3"/>
<dbReference type="EMBL" id="AF509146">
    <property type="protein sequence ID" value="AAO52989.1"/>
    <property type="molecule type" value="Genomic_DNA"/>
</dbReference>
<dbReference type="SMR" id="Q809Q1"/>
<dbReference type="GO" id="GO:0033650">
    <property type="term" value="C:host cell mitochondrion"/>
    <property type="evidence" value="ECO:0007669"/>
    <property type="project" value="UniProtKB-SubCell"/>
</dbReference>
<dbReference type="GO" id="GO:0042025">
    <property type="term" value="C:host cell nucleus"/>
    <property type="evidence" value="ECO:0007669"/>
    <property type="project" value="UniProtKB-SubCell"/>
</dbReference>
<dbReference type="GO" id="GO:0044423">
    <property type="term" value="C:virion component"/>
    <property type="evidence" value="ECO:0007669"/>
    <property type="project" value="UniProtKB-KW"/>
</dbReference>
<dbReference type="GO" id="GO:0003723">
    <property type="term" value="F:RNA binding"/>
    <property type="evidence" value="ECO:0007669"/>
    <property type="project" value="InterPro"/>
</dbReference>
<dbReference type="GO" id="GO:0006370">
    <property type="term" value="P:7-methylguanosine mRNA capping"/>
    <property type="evidence" value="ECO:0007669"/>
    <property type="project" value="UniProtKB-KW"/>
</dbReference>
<dbReference type="GO" id="GO:0075526">
    <property type="term" value="P:cap snatching"/>
    <property type="evidence" value="ECO:0007669"/>
    <property type="project" value="UniProtKB-KW"/>
</dbReference>
<dbReference type="GO" id="GO:0006351">
    <property type="term" value="P:DNA-templated transcription"/>
    <property type="evidence" value="ECO:0007669"/>
    <property type="project" value="InterPro"/>
</dbReference>
<dbReference type="GO" id="GO:0039545">
    <property type="term" value="P:symbiont-mediated suppression of host cytoplasmic pattern recognition receptor signaling pathway via inhibition of MAVS activity"/>
    <property type="evidence" value="ECO:0007669"/>
    <property type="project" value="UniProtKB-KW"/>
</dbReference>
<dbReference type="GO" id="GO:0039657">
    <property type="term" value="P:symbiont-mediated suppression of host gene expression"/>
    <property type="evidence" value="ECO:0007669"/>
    <property type="project" value="UniProtKB-KW"/>
</dbReference>
<dbReference type="GO" id="GO:0039523">
    <property type="term" value="P:symbiont-mediated suppression of host mRNA transcription via inhibition of RNA polymerase II activity"/>
    <property type="evidence" value="ECO:0007669"/>
    <property type="project" value="UniProtKB-KW"/>
</dbReference>
<dbReference type="Gene3D" id="3.30.30.90">
    <property type="entry name" value="Polymerase Basic Protein 2, C-terminal domain"/>
    <property type="match status" value="1"/>
</dbReference>
<dbReference type="InterPro" id="IPR049114">
    <property type="entry name" value="Flu_PB2_6th"/>
</dbReference>
<dbReference type="InterPro" id="IPR049115">
    <property type="entry name" value="Flu_PB2_C"/>
</dbReference>
<dbReference type="InterPro" id="IPR048298">
    <property type="entry name" value="Flu_PB2_CAP-bd"/>
</dbReference>
<dbReference type="InterPro" id="IPR037258">
    <property type="entry name" value="PDB2_C"/>
</dbReference>
<dbReference type="Pfam" id="PF00604">
    <property type="entry name" value="Flu_PB2_5th"/>
    <property type="match status" value="1"/>
</dbReference>
<dbReference type="Pfam" id="PF20951">
    <property type="entry name" value="Flu_PB2_6th"/>
    <property type="match status" value="1"/>
</dbReference>
<dbReference type="Pfam" id="PF20952">
    <property type="entry name" value="Flu_PB2_7th"/>
    <property type="match status" value="1"/>
</dbReference>
<dbReference type="SUPFAM" id="SSF160453">
    <property type="entry name" value="PB2 C-terminal domain-like"/>
    <property type="match status" value="1"/>
</dbReference>
<feature type="chain" id="PRO_0000311146" description="Polymerase basic protein 2">
    <location>
        <begin position="1" status="less than"/>
        <end position="406" status="greater than"/>
    </location>
</feature>
<feature type="short sequence motif" description="Nuclear localization signal" evidence="1">
    <location>
        <begin position="400"/>
        <end position="403"/>
    </location>
</feature>
<feature type="non-terminal residue">
    <location>
        <position position="1"/>
    </location>
</feature>
<feature type="non-terminal residue">
    <location>
        <position position="406"/>
    </location>
</feature>
<proteinExistence type="inferred from homology"/>
<gene>
    <name type="primary">PB2</name>
</gene>
<keyword id="KW-1157">Cap snatching</keyword>
<keyword id="KW-1262">Eukaryotic host gene expression shutoff by virus</keyword>
<keyword id="KW-1191">Eukaryotic host transcription shutoff by virus</keyword>
<keyword id="KW-1190">Host gene expression shutoff by virus</keyword>
<keyword id="KW-1045">Host mitochondrion</keyword>
<keyword id="KW-1048">Host nucleus</keyword>
<keyword id="KW-0945">Host-virus interaction</keyword>
<keyword id="KW-1090">Inhibition of host innate immune response by virus</keyword>
<keyword id="KW-1097">Inhibition of host MAVS by virus</keyword>
<keyword id="KW-1113">Inhibition of host RLR pathway by virus</keyword>
<keyword id="KW-1104">Inhibition of host RNA polymerase II by virus</keyword>
<keyword id="KW-0506">mRNA capping</keyword>
<keyword id="KW-0507">mRNA processing</keyword>
<keyword id="KW-0899">Viral immunoevasion</keyword>
<keyword id="KW-1195">Viral transcription</keyword>
<keyword id="KW-0946">Virion</keyword>
<reference key="1">
    <citation type="journal article" date="2002" name="Proc. Natl. Acad. Sci. U.S.A.">
        <title>Emergence of multiple genotypes of H5N1 avian influenza viruses in Hong Kong SAR.</title>
        <authorList>
            <person name="Guan Y."/>
            <person name="Peiris J.S.M."/>
            <person name="Lipatov A.S."/>
            <person name="Ellis T.M."/>
            <person name="Dyrting K.C."/>
            <person name="Krauss S."/>
            <person name="Zhang L.J."/>
            <person name="Webster R.G."/>
            <person name="Shortridge K.F."/>
        </authorList>
    </citation>
    <scope>NUCLEOTIDE SEQUENCE [GENOMIC RNA]</scope>
</reference>
<protein>
    <recommendedName>
        <fullName>Polymerase basic protein 2</fullName>
    </recommendedName>
    <alternativeName>
        <fullName>RNA-directed RNA polymerase subunit P3</fullName>
    </alternativeName>
</protein>
<name>PB2_I01A2</name>
<organismHost>
    <name type="scientific">Aves</name>
    <dbReference type="NCBI Taxonomy" id="8782"/>
</organismHost>
<organismHost>
    <name type="scientific">Felis catus</name>
    <name type="common">Cat</name>
    <name type="synonym">Felis silvestris catus</name>
    <dbReference type="NCBI Taxonomy" id="9685"/>
</organismHost>
<organismHost>
    <name type="scientific">Homo sapiens</name>
    <name type="common">Human</name>
    <dbReference type="NCBI Taxonomy" id="9606"/>
</organismHost>
<organismHost>
    <name type="scientific">Panthera pardus</name>
    <name type="common">Leopard</name>
    <name type="synonym">Felis pardus</name>
    <dbReference type="NCBI Taxonomy" id="9691"/>
</organismHost>
<organismHost>
    <name type="scientific">Panthera tigris</name>
    <name type="common">Tiger</name>
    <dbReference type="NCBI Taxonomy" id="9694"/>
</organismHost>
<organismHost>
    <name type="scientific">Sus scrofa</name>
    <name type="common">Pig</name>
    <dbReference type="NCBI Taxonomy" id="9823"/>
</organismHost>
<sequence>SVKKEEEVLTGNLQTLKIRVHEGYEEFTMVGRRATAILRKATRRLIQLIVSGRDEQSIAEAIIVAMVFSQEDCMIKAVRGDLNFVNRANQRLNPMHQLLRHFQKDAKVLFQNWGIEPIDNVMGMIGILPDMTPSTEMSLRGVRVSKMGVDEYSSTERVVVSIDRFLRVRDQRGNVLLSPEEVSETQGTEKLTITYSSSMMWEINGPESVLVNTYQWIIRNWETVKIQWSQDPTMLYNKMEFEPFQSLVPKAARGQYSGFVRTLFQQMRDVLGTFDTVQIIKLLPFAAAPPEQSRMQFSSLTVNVRGSGMRILVRGNSPVFNYNKATKRLTVLGKDAGALTEDPDEGTAGVESAVLRGFLILGKEDKRYGPALSINELSNLAKGEKANVLIGQGDVVLVMKRKRDSS</sequence>
<accession>Q809Q1</accession>